<sequence>MEKPRGVRCTNGFPERELPRPGASRPAEKSRPPEAKGAQPADAWKAGRPRSEEDNELNLPNLAAAYSSILRSLGEDPQRQGLLKTPWRAATAMQFFTKGYQETISDVLNDAIFDEDHDEMVIVKDIDMFSMCEHHLVPFVGRVHIGYLPNKQVLGLSKLARIVEIYSRRLQVQERLTKQIAVAITEALQPAGVGVVIEATHMCMVMRGVQKMNSKTVTSTMLGVFREDPKTREEFLTLIRS</sequence>
<keyword id="KW-0002">3D-structure</keyword>
<keyword id="KW-0021">Allosteric enzyme</keyword>
<keyword id="KW-0963">Cytoplasm</keyword>
<keyword id="KW-0903">Direct protein sequencing</keyword>
<keyword id="KW-0342">GTP-binding</keyword>
<keyword id="KW-0378">Hydrolase</keyword>
<keyword id="KW-0479">Metal-binding</keyword>
<keyword id="KW-0547">Nucleotide-binding</keyword>
<keyword id="KW-0539">Nucleus</keyword>
<keyword id="KW-0597">Phosphoprotein</keyword>
<keyword id="KW-1185">Reference proteome</keyword>
<keyword id="KW-0783">Tetrahydrobiopterin biosynthesis</keyword>
<keyword id="KW-0862">Zinc</keyword>
<reference key="1">
    <citation type="journal article" date="1991" name="J. Biol. Chem.">
        <title>Cloning and sequencing of cDNA encoding rat GTP cyclohydrolase I. The first enzyme of the tetrahydrobiopterin biosynthetic pathway.</title>
        <authorList>
            <person name="Hatakeyama K."/>
            <person name="Inoue Y."/>
            <person name="Harada T."/>
            <person name="Kagamiyama H."/>
        </authorList>
    </citation>
    <scope>NUCLEOTIDE SEQUENCE [MRNA]</scope>
    <scope>PARTIAL PROTEIN SEQUENCE</scope>
    <source>
        <strain>Wistar</strain>
        <tissue>Liver</tissue>
    </source>
</reference>
<reference key="2">
    <citation type="journal article" date="1994" name="Biochem. Biophys. Res. Commun.">
        <title>Identification of a rabphilin-3A-interacting protein as GTP cyclohydrolase I in PC12 cells.</title>
        <authorList>
            <person name="Imazumi K."/>
            <person name="Sasaki T."/>
            <person name="Takahashi K."/>
            <person name="Takai Y."/>
        </authorList>
    </citation>
    <scope>PROTEIN SEQUENCE OF 37-46 AND 99-116</scope>
</reference>
<reference key="3">
    <citation type="journal article" date="1989" name="J. Biol. Chem.">
        <title>Purification and characterization of rat liver GTP cyclohydrolase I. Cooperative binding of GTP to the enzyme.</title>
        <authorList>
            <person name="Hatakeyama K."/>
            <person name="Harada T."/>
            <person name="Suzuki S."/>
            <person name="Watanabe Y."/>
            <person name="Kagamiyama H."/>
        </authorList>
    </citation>
    <scope>PARTIAL PROTEIN SEQUENCE</scope>
    <scope>CATALYTIC ACTIVITY</scope>
    <scope>PATHWAY</scope>
    <scope>BIOPHYSICOCHEMICAL PROPERTIES</scope>
    <scope>ACTIVITY REGULATION</scope>
</reference>
<reference key="4">
    <citation type="journal article" date="2006" name="Nat. Med.">
        <title>GTP cyclohydrolase and tetrahydrobiopterin regulate pain sensitivity and persistence.</title>
        <authorList>
            <person name="Tegeder I."/>
            <person name="Costigan M."/>
            <person name="Griffin R.S."/>
            <person name="Abele A."/>
            <person name="Belfer I."/>
            <person name="Schmidt H."/>
            <person name="Ehnert C."/>
            <person name="Nejim J."/>
            <person name="Marian C."/>
            <person name="Scholz J."/>
            <person name="Wu T."/>
            <person name="Allchorne A."/>
            <person name="Diatchenko L."/>
            <person name="Binshtok A.M."/>
            <person name="Goldman D."/>
            <person name="Adolph J."/>
            <person name="Sama S."/>
            <person name="Atlas S.J."/>
            <person name="Carlezon W.A."/>
            <person name="Parsegian A."/>
            <person name="Loetsch J."/>
            <person name="Fillingim R.B."/>
            <person name="Maixner W."/>
            <person name="Geisslinger G."/>
            <person name="Max M.B."/>
            <person name="Woolf C.J."/>
        </authorList>
    </citation>
    <scope>FUNCTION</scope>
</reference>
<reference key="5">
    <citation type="journal article" date="2012" name="Nat. Commun.">
        <title>Quantitative maps of protein phosphorylation sites across 14 different rat organs and tissues.</title>
        <authorList>
            <person name="Lundby A."/>
            <person name="Secher A."/>
            <person name="Lage K."/>
            <person name="Nordsborg N.B."/>
            <person name="Dmytriyev A."/>
            <person name="Lundby C."/>
            <person name="Olsen J.V."/>
        </authorList>
    </citation>
    <scope>PHOSPHORYLATION [LARGE SCALE ANALYSIS] AT SER-51</scope>
    <scope>IDENTIFICATION BY MASS SPECTROMETRY [LARGE SCALE ANALYSIS]</scope>
</reference>
<reference key="6">
    <citation type="journal article" date="2002" name="Proc. Natl. Acad. Sci. U.S.A.">
        <title>Crystal structure of the stimulatory complex of GTP cyclohydrolase I and its feedback regulatory protein GFRP.</title>
        <authorList>
            <person name="Maita N."/>
            <person name="Okada K."/>
            <person name="Hatakeyama K."/>
            <person name="Hakoshima T."/>
        </authorList>
    </citation>
    <scope>X-RAY CRYSTALLOGRAPHY (2.8 ANGSTROMS) OF 12-241 IN COMPLEX WITH GCHFR</scope>
    <scope>SUBUNIT</scope>
</reference>
<organism>
    <name type="scientific">Rattus norvegicus</name>
    <name type="common">Rat</name>
    <dbReference type="NCBI Taxonomy" id="10116"/>
    <lineage>
        <taxon>Eukaryota</taxon>
        <taxon>Metazoa</taxon>
        <taxon>Chordata</taxon>
        <taxon>Craniata</taxon>
        <taxon>Vertebrata</taxon>
        <taxon>Euteleostomi</taxon>
        <taxon>Mammalia</taxon>
        <taxon>Eutheria</taxon>
        <taxon>Euarchontoglires</taxon>
        <taxon>Glires</taxon>
        <taxon>Rodentia</taxon>
        <taxon>Myomorpha</taxon>
        <taxon>Muroidea</taxon>
        <taxon>Muridae</taxon>
        <taxon>Murinae</taxon>
        <taxon>Rattus</taxon>
    </lineage>
</organism>
<evidence type="ECO:0000250" key="1"/>
<evidence type="ECO:0000250" key="2">
    <source>
        <dbReference type="UniProtKB" id="P30793"/>
    </source>
</evidence>
<evidence type="ECO:0000256" key="3">
    <source>
        <dbReference type="SAM" id="MobiDB-lite"/>
    </source>
</evidence>
<evidence type="ECO:0000269" key="4">
    <source>
    </source>
</evidence>
<evidence type="ECO:0000269" key="5">
    <source>
    </source>
</evidence>
<evidence type="ECO:0000269" key="6">
    <source>
    </source>
</evidence>
<evidence type="ECO:0000305" key="7"/>
<evidence type="ECO:0000305" key="8">
    <source>
    </source>
</evidence>
<evidence type="ECO:0007744" key="9">
    <source>
    </source>
</evidence>
<evidence type="ECO:0007829" key="10">
    <source>
        <dbReference type="PDB" id="1IS7"/>
    </source>
</evidence>
<evidence type="ECO:0007829" key="11">
    <source>
        <dbReference type="PDB" id="1IS8"/>
    </source>
</evidence>
<gene>
    <name type="primary">Gch1</name>
    <name type="synonym">Gch</name>
</gene>
<protein>
    <recommendedName>
        <fullName>GTP cyclohydrolase 1</fullName>
        <ecNumber evidence="6">3.5.4.16</ecNumber>
    </recommendedName>
    <alternativeName>
        <fullName>GTP cyclohydrolase I</fullName>
        <shortName>GTP-CH-I</shortName>
    </alternativeName>
</protein>
<proteinExistence type="evidence at protein level"/>
<name>GCH1_RAT</name>
<comment type="function">
    <text evidence="2 5">May positively regulate nitric oxide synthesis in endothelial cells. May be involved in dopamine synthesis (By similarity). May modify pain sensitivity and persistence.</text>
</comment>
<comment type="catalytic activity">
    <reaction evidence="6">
        <text>GTP + H2O = 7,8-dihydroneopterin 3'-triphosphate + formate + H(+)</text>
        <dbReference type="Rhea" id="RHEA:17473"/>
        <dbReference type="ChEBI" id="CHEBI:15377"/>
        <dbReference type="ChEBI" id="CHEBI:15378"/>
        <dbReference type="ChEBI" id="CHEBI:15740"/>
        <dbReference type="ChEBI" id="CHEBI:37565"/>
        <dbReference type="ChEBI" id="CHEBI:58462"/>
        <dbReference type="EC" id="3.5.4.16"/>
    </reaction>
</comment>
<comment type="activity regulation">
    <text evidence="6">GTP shows a positive allosteric effect, and tetrahydrobiopterin inhibits the enzyme activity. Zinc is required for catalytic activity. Inhibited by Mg(2+).</text>
</comment>
<comment type="biophysicochemical properties">
    <kinetics>
        <Vmax evidence="6">2.7 umol/h/mg enzyme (at pH 7.5 and 37 degrees Celsius)</Vmax>
    </kinetics>
</comment>
<comment type="pathway">
    <text evidence="8">Cofactor biosynthesis; 7,8-dihydroneopterin triphosphate biosynthesis; 7,8-dihydroneopterin triphosphate from GTP: step 1/1.</text>
</comment>
<comment type="subunit">
    <text evidence="4">Toroid-shaped homodecamer, composed of two pentamers of five dimers. Interacts with AHSA1 and GCHFR/GFRP.</text>
</comment>
<comment type="interaction">
    <interactant intactId="EBI-1032708">
        <id>P22288</id>
    </interactant>
    <interactant intactId="EBI-1032715">
        <id>P70552</id>
        <label>Gchfr</label>
    </interactant>
    <organismsDiffer>false</organismsDiffer>
    <experiments>3</experiments>
</comment>
<comment type="subcellular location">
    <subcellularLocation>
        <location evidence="2">Cytoplasm</location>
    </subcellularLocation>
    <subcellularLocation>
        <location evidence="2">Nucleus</location>
    </subcellularLocation>
</comment>
<comment type="induction">
    <text>By cytokines such as insulin, interferon-gamma, and phytohemagglutinin in adrenal gland, macrophages, and T-cell respectively.</text>
</comment>
<comment type="PTM">
    <text evidence="2">Phosphorylated.</text>
</comment>
<comment type="similarity">
    <text evidence="7">Belongs to the GTP cyclohydrolase I family.</text>
</comment>
<accession>P22288</accession>
<feature type="propeptide" id="PRO_0000010720">
    <location>
        <begin position="1"/>
        <end position="11"/>
    </location>
</feature>
<feature type="chain" id="PRO_0000010721" description="GTP cyclohydrolase 1">
    <location>
        <begin position="12"/>
        <end position="241"/>
    </location>
</feature>
<feature type="region of interest" description="Disordered" evidence="3">
    <location>
        <begin position="1"/>
        <end position="58"/>
    </location>
</feature>
<feature type="binding site" evidence="2">
    <location>
        <position position="132"/>
    </location>
    <ligand>
        <name>Zn(2+)</name>
        <dbReference type="ChEBI" id="CHEBI:29105"/>
    </ligand>
</feature>
<feature type="binding site" evidence="2">
    <location>
        <position position="135"/>
    </location>
    <ligand>
        <name>Zn(2+)</name>
        <dbReference type="ChEBI" id="CHEBI:29105"/>
    </ligand>
</feature>
<feature type="binding site" evidence="2">
    <location>
        <position position="203"/>
    </location>
    <ligand>
        <name>Zn(2+)</name>
        <dbReference type="ChEBI" id="CHEBI:29105"/>
    </ligand>
</feature>
<feature type="site" description="Involved in pterin ring binding" evidence="1">
    <location>
        <position position="87"/>
    </location>
</feature>
<feature type="site" description="Involved in pterin ring binding" evidence="1">
    <location>
        <position position="96"/>
    </location>
</feature>
<feature type="modified residue" description="Phosphoserine" evidence="9">
    <location>
        <position position="51"/>
    </location>
</feature>
<feature type="modified residue" description="Phosphoserine" evidence="2">
    <location>
        <position position="72"/>
    </location>
</feature>
<feature type="helix" evidence="11">
    <location>
        <begin position="52"/>
        <end position="73"/>
    </location>
</feature>
<feature type="turn" evidence="11">
    <location>
        <begin position="80"/>
        <end position="84"/>
    </location>
</feature>
<feature type="helix" evidence="11">
    <location>
        <begin position="85"/>
        <end position="96"/>
    </location>
</feature>
<feature type="helix" evidence="11">
    <location>
        <begin position="98"/>
        <end position="101"/>
    </location>
</feature>
<feature type="helix" evidence="11">
    <location>
        <begin position="105"/>
        <end position="108"/>
    </location>
</feature>
<feature type="strand" evidence="11">
    <location>
        <begin position="109"/>
        <end position="111"/>
    </location>
</feature>
<feature type="strand" evidence="10">
    <location>
        <begin position="112"/>
        <end position="117"/>
    </location>
</feature>
<feature type="strand" evidence="11">
    <location>
        <begin position="121"/>
        <end position="132"/>
    </location>
</feature>
<feature type="turn" evidence="11">
    <location>
        <begin position="133"/>
        <end position="135"/>
    </location>
</feature>
<feature type="strand" evidence="11">
    <location>
        <begin position="138"/>
        <end position="148"/>
    </location>
</feature>
<feature type="strand" evidence="10">
    <location>
        <begin position="150"/>
        <end position="154"/>
    </location>
</feature>
<feature type="helix" evidence="11">
    <location>
        <begin position="156"/>
        <end position="167"/>
    </location>
</feature>
<feature type="strand" evidence="11">
    <location>
        <begin position="168"/>
        <end position="171"/>
    </location>
</feature>
<feature type="helix" evidence="11">
    <location>
        <begin position="173"/>
        <end position="188"/>
    </location>
</feature>
<feature type="strand" evidence="11">
    <location>
        <begin position="191"/>
        <end position="201"/>
    </location>
</feature>
<feature type="helix" evidence="11">
    <location>
        <begin position="202"/>
        <end position="205"/>
    </location>
</feature>
<feature type="strand" evidence="10">
    <location>
        <begin position="207"/>
        <end position="210"/>
    </location>
</feature>
<feature type="strand" evidence="11">
    <location>
        <begin position="215"/>
        <end position="223"/>
    </location>
</feature>
<feature type="helix" evidence="11">
    <location>
        <begin position="224"/>
        <end position="227"/>
    </location>
</feature>
<feature type="helix" evidence="11">
    <location>
        <begin position="229"/>
        <end position="239"/>
    </location>
</feature>
<dbReference type="EC" id="3.5.4.16" evidence="6"/>
<dbReference type="EMBL" id="M58364">
    <property type="protein sequence ID" value="AAA41299.1"/>
    <property type="molecule type" value="mRNA"/>
</dbReference>
<dbReference type="PIR" id="A39080">
    <property type="entry name" value="A39080"/>
</dbReference>
<dbReference type="RefSeq" id="NP_077332.1">
    <property type="nucleotide sequence ID" value="NM_024356.1"/>
</dbReference>
<dbReference type="PDB" id="1IS7">
    <property type="method" value="X-ray"/>
    <property type="resolution" value="2.80 A"/>
    <property type="chains" value="A/B/C/D/E/F/G/H/I/J=12-241"/>
</dbReference>
<dbReference type="PDB" id="1IS8">
    <property type="method" value="X-ray"/>
    <property type="resolution" value="2.70 A"/>
    <property type="chains" value="A/B/C/D/E/F/G/H/I/J=12-241"/>
</dbReference>
<dbReference type="PDB" id="1WPL">
    <property type="method" value="X-ray"/>
    <property type="resolution" value="2.80 A"/>
    <property type="chains" value="A/B/C/D/E/F/G/H/I/J=12-241"/>
</dbReference>
<dbReference type="PDBsum" id="1IS7"/>
<dbReference type="PDBsum" id="1IS8"/>
<dbReference type="PDBsum" id="1WPL"/>
<dbReference type="SMR" id="P22288"/>
<dbReference type="BioGRID" id="247920">
    <property type="interactions" value="2"/>
</dbReference>
<dbReference type="CORUM" id="P22288"/>
<dbReference type="FunCoup" id="P22288">
    <property type="interactions" value="692"/>
</dbReference>
<dbReference type="IntAct" id="P22288">
    <property type="interactions" value="1"/>
</dbReference>
<dbReference type="STRING" id="10116.ENSRNOP00000014821"/>
<dbReference type="iPTMnet" id="P22288"/>
<dbReference type="PhosphoSitePlus" id="P22288"/>
<dbReference type="jPOST" id="P22288"/>
<dbReference type="PaxDb" id="10116-ENSRNOP00000014821"/>
<dbReference type="Ensembl" id="ENSRNOT00000014821.8">
    <property type="protein sequence ID" value="ENSRNOP00000014821.5"/>
    <property type="gene ID" value="ENSRNOG00000011039.8"/>
</dbReference>
<dbReference type="GeneID" id="29244"/>
<dbReference type="KEGG" id="rno:29244"/>
<dbReference type="UCSC" id="RGD:61992">
    <property type="organism name" value="rat"/>
</dbReference>
<dbReference type="AGR" id="RGD:61992"/>
<dbReference type="CTD" id="2643"/>
<dbReference type="RGD" id="61992">
    <property type="gene designation" value="Gch1"/>
</dbReference>
<dbReference type="eggNOG" id="KOG2698">
    <property type="taxonomic scope" value="Eukaryota"/>
</dbReference>
<dbReference type="GeneTree" id="ENSGT00390000013481"/>
<dbReference type="HOGENOM" id="CLU_049768_1_3_1"/>
<dbReference type="InParanoid" id="P22288"/>
<dbReference type="OMA" id="CEHMCMS"/>
<dbReference type="OrthoDB" id="4966at2759"/>
<dbReference type="PhylomeDB" id="P22288"/>
<dbReference type="BRENDA" id="3.5.4.16">
    <property type="organism ID" value="5301"/>
</dbReference>
<dbReference type="Reactome" id="R-RNO-1474151">
    <property type="pathway name" value="Tetrahydrobiopterin (BH4) synthesis, recycling, salvage and regulation"/>
</dbReference>
<dbReference type="SABIO-RK" id="P22288"/>
<dbReference type="UniPathway" id="UPA00848">
    <property type="reaction ID" value="UER00151"/>
</dbReference>
<dbReference type="EvolutionaryTrace" id="P22288"/>
<dbReference type="PRO" id="PR:P22288"/>
<dbReference type="Proteomes" id="UP000002494">
    <property type="component" value="Chromosome 15"/>
</dbReference>
<dbReference type="Bgee" id="ENSRNOG00000011039">
    <property type="expression patterns" value="Expressed in duodenum and 17 other cell types or tissues"/>
</dbReference>
<dbReference type="GO" id="GO:0005737">
    <property type="term" value="C:cytoplasm"/>
    <property type="evidence" value="ECO:0000266"/>
    <property type="project" value="RGD"/>
</dbReference>
<dbReference type="GO" id="GO:0031410">
    <property type="term" value="C:cytoplasmic vesicle"/>
    <property type="evidence" value="ECO:0000266"/>
    <property type="project" value="RGD"/>
</dbReference>
<dbReference type="GO" id="GO:0005829">
    <property type="term" value="C:cytosol"/>
    <property type="evidence" value="ECO:0000266"/>
    <property type="project" value="RGD"/>
</dbReference>
<dbReference type="GO" id="GO:0140535">
    <property type="term" value="C:intracellular protein-containing complex"/>
    <property type="evidence" value="ECO:0000314"/>
    <property type="project" value="RGD"/>
</dbReference>
<dbReference type="GO" id="GO:0005739">
    <property type="term" value="C:mitochondrion"/>
    <property type="evidence" value="ECO:0000314"/>
    <property type="project" value="RGD"/>
</dbReference>
<dbReference type="GO" id="GO:0005634">
    <property type="term" value="C:nucleus"/>
    <property type="evidence" value="ECO:0000314"/>
    <property type="project" value="RGD"/>
</dbReference>
<dbReference type="GO" id="GO:0032991">
    <property type="term" value="C:protein-containing complex"/>
    <property type="evidence" value="ECO:0000314"/>
    <property type="project" value="RGD"/>
</dbReference>
<dbReference type="GO" id="GO:0005509">
    <property type="term" value="F:calcium ion binding"/>
    <property type="evidence" value="ECO:0000314"/>
    <property type="project" value="RGD"/>
</dbReference>
<dbReference type="GO" id="GO:0005525">
    <property type="term" value="F:GTP binding"/>
    <property type="evidence" value="ECO:0000314"/>
    <property type="project" value="RGD"/>
</dbReference>
<dbReference type="GO" id="GO:0003934">
    <property type="term" value="F:GTP cyclohydrolase I activity"/>
    <property type="evidence" value="ECO:0000314"/>
    <property type="project" value="RGD"/>
</dbReference>
<dbReference type="GO" id="GO:0030742">
    <property type="term" value="F:GTP-dependent protein binding"/>
    <property type="evidence" value="ECO:0000353"/>
    <property type="project" value="RGD"/>
</dbReference>
<dbReference type="GO" id="GO:0003924">
    <property type="term" value="F:GTPase activity"/>
    <property type="evidence" value="ECO:0000266"/>
    <property type="project" value="RGD"/>
</dbReference>
<dbReference type="GO" id="GO:0042802">
    <property type="term" value="F:identical protein binding"/>
    <property type="evidence" value="ECO:0000314"/>
    <property type="project" value="RGD"/>
</dbReference>
<dbReference type="GO" id="GO:0051019">
    <property type="term" value="F:mitogen-activated protein kinase binding"/>
    <property type="evidence" value="ECO:0000266"/>
    <property type="project" value="RGD"/>
</dbReference>
<dbReference type="GO" id="GO:0042803">
    <property type="term" value="F:protein homodimerization activity"/>
    <property type="evidence" value="ECO:0000266"/>
    <property type="project" value="RGD"/>
</dbReference>
<dbReference type="GO" id="GO:0044877">
    <property type="term" value="F:protein-containing complex binding"/>
    <property type="evidence" value="ECO:0000314"/>
    <property type="project" value="RGD"/>
</dbReference>
<dbReference type="GO" id="GO:0008270">
    <property type="term" value="F:zinc ion binding"/>
    <property type="evidence" value="ECO:0000314"/>
    <property type="project" value="RGD"/>
</dbReference>
<dbReference type="GO" id="GO:0051066">
    <property type="term" value="P:dihydrobiopterin metabolic process"/>
    <property type="evidence" value="ECO:0000314"/>
    <property type="project" value="RGD"/>
</dbReference>
<dbReference type="GO" id="GO:0042416">
    <property type="term" value="P:dopamine biosynthetic process"/>
    <property type="evidence" value="ECO:0000266"/>
    <property type="project" value="RGD"/>
</dbReference>
<dbReference type="GO" id="GO:0045776">
    <property type="term" value="P:negative regulation of blood pressure"/>
    <property type="evidence" value="ECO:0000315"/>
    <property type="project" value="RGD"/>
</dbReference>
<dbReference type="GO" id="GO:0010667">
    <property type="term" value="P:negative regulation of cardiac muscle cell apoptotic process"/>
    <property type="evidence" value="ECO:0000315"/>
    <property type="project" value="RGD"/>
</dbReference>
<dbReference type="GO" id="GO:2000773">
    <property type="term" value="P:negative regulation of cellular senescence"/>
    <property type="evidence" value="ECO:0000315"/>
    <property type="project" value="RGD"/>
</dbReference>
<dbReference type="GO" id="GO:0050884">
    <property type="term" value="P:neuromuscular process controlling posture"/>
    <property type="evidence" value="ECO:0000266"/>
    <property type="project" value="RGD"/>
</dbReference>
<dbReference type="GO" id="GO:0010460">
    <property type="term" value="P:positive regulation of heart rate"/>
    <property type="evidence" value="ECO:0000266"/>
    <property type="project" value="RGD"/>
</dbReference>
<dbReference type="GO" id="GO:0043525">
    <property type="term" value="P:positive regulation of neuron apoptotic process"/>
    <property type="evidence" value="ECO:0000315"/>
    <property type="project" value="RGD"/>
</dbReference>
<dbReference type="GO" id="GO:0032212">
    <property type="term" value="P:positive regulation of telomere maintenance via telomerase"/>
    <property type="evidence" value="ECO:0000315"/>
    <property type="project" value="RGD"/>
</dbReference>
<dbReference type="GO" id="GO:0065003">
    <property type="term" value="P:protein-containing complex assembly"/>
    <property type="evidence" value="ECO:0000314"/>
    <property type="project" value="RGD"/>
</dbReference>
<dbReference type="GO" id="GO:0042559">
    <property type="term" value="P:pteridine-containing compound biosynthetic process"/>
    <property type="evidence" value="ECO:0000266"/>
    <property type="project" value="RGD"/>
</dbReference>
<dbReference type="GO" id="GO:0008217">
    <property type="term" value="P:regulation of blood pressure"/>
    <property type="evidence" value="ECO:0000266"/>
    <property type="project" value="RGD"/>
</dbReference>
<dbReference type="GO" id="GO:0014916">
    <property type="term" value="P:regulation of lung blood pressure"/>
    <property type="evidence" value="ECO:0000266"/>
    <property type="project" value="RGD"/>
</dbReference>
<dbReference type="GO" id="GO:2000121">
    <property type="term" value="P:regulation of removal of superoxide radicals"/>
    <property type="evidence" value="ECO:0000266"/>
    <property type="project" value="RGD"/>
</dbReference>
<dbReference type="GO" id="GO:0032496">
    <property type="term" value="P:response to lipopolysaccharide"/>
    <property type="evidence" value="ECO:0000266"/>
    <property type="project" value="RGD"/>
</dbReference>
<dbReference type="GO" id="GO:0048265">
    <property type="term" value="P:response to pain"/>
    <property type="evidence" value="ECO:0000314"/>
    <property type="project" value="UniProtKB"/>
</dbReference>
<dbReference type="GO" id="GO:0034612">
    <property type="term" value="P:response to tumor necrosis factor"/>
    <property type="evidence" value="ECO:0000266"/>
    <property type="project" value="RGD"/>
</dbReference>
<dbReference type="GO" id="GO:0034341">
    <property type="term" value="P:response to type II interferon"/>
    <property type="evidence" value="ECO:0000266"/>
    <property type="project" value="RGD"/>
</dbReference>
<dbReference type="GO" id="GO:0006729">
    <property type="term" value="P:tetrahydrobiopterin biosynthetic process"/>
    <property type="evidence" value="ECO:0000266"/>
    <property type="project" value="RGD"/>
</dbReference>
<dbReference type="GO" id="GO:0046654">
    <property type="term" value="P:tetrahydrofolate biosynthetic process"/>
    <property type="evidence" value="ECO:0007669"/>
    <property type="project" value="InterPro"/>
</dbReference>
<dbReference type="GO" id="GO:0042311">
    <property type="term" value="P:vasodilation"/>
    <property type="evidence" value="ECO:0000315"/>
    <property type="project" value="RGD"/>
</dbReference>
<dbReference type="CDD" id="cd00642">
    <property type="entry name" value="GTP_cyclohydro1"/>
    <property type="match status" value="1"/>
</dbReference>
<dbReference type="FunFam" id="1.10.286.10:FF:000003">
    <property type="entry name" value="GTP cyclohydrolase 1"/>
    <property type="match status" value="1"/>
</dbReference>
<dbReference type="FunFam" id="3.30.1130.10:FF:000012">
    <property type="entry name" value="GTP cyclohydrolase 1"/>
    <property type="match status" value="1"/>
</dbReference>
<dbReference type="Gene3D" id="1.10.286.10">
    <property type="match status" value="1"/>
</dbReference>
<dbReference type="Gene3D" id="3.30.1130.10">
    <property type="match status" value="1"/>
</dbReference>
<dbReference type="HAMAP" id="MF_00223">
    <property type="entry name" value="FolE"/>
    <property type="match status" value="1"/>
</dbReference>
<dbReference type="InterPro" id="IPR043133">
    <property type="entry name" value="GTP-CH-I_C/QueF"/>
</dbReference>
<dbReference type="InterPro" id="IPR043134">
    <property type="entry name" value="GTP-CH-I_N"/>
</dbReference>
<dbReference type="InterPro" id="IPR001474">
    <property type="entry name" value="GTP_CycHdrlase_I"/>
</dbReference>
<dbReference type="InterPro" id="IPR018234">
    <property type="entry name" value="GTP_CycHdrlase_I_CS"/>
</dbReference>
<dbReference type="InterPro" id="IPR020602">
    <property type="entry name" value="GTP_CycHdrlase_I_dom"/>
</dbReference>
<dbReference type="NCBIfam" id="TIGR00063">
    <property type="entry name" value="folE"/>
    <property type="match status" value="1"/>
</dbReference>
<dbReference type="NCBIfam" id="NF006825">
    <property type="entry name" value="PRK09347.1-2"/>
    <property type="match status" value="1"/>
</dbReference>
<dbReference type="NCBIfam" id="NF006826">
    <property type="entry name" value="PRK09347.1-3"/>
    <property type="match status" value="1"/>
</dbReference>
<dbReference type="PANTHER" id="PTHR11109:SF11">
    <property type="entry name" value="GTP CYCLOHYDROLASE 1"/>
    <property type="match status" value="1"/>
</dbReference>
<dbReference type="PANTHER" id="PTHR11109">
    <property type="entry name" value="GTP CYCLOHYDROLASE I"/>
    <property type="match status" value="1"/>
</dbReference>
<dbReference type="Pfam" id="PF01227">
    <property type="entry name" value="GTP_cyclohydroI"/>
    <property type="match status" value="1"/>
</dbReference>
<dbReference type="SUPFAM" id="SSF55620">
    <property type="entry name" value="Tetrahydrobiopterin biosynthesis enzymes-like"/>
    <property type="match status" value="1"/>
</dbReference>
<dbReference type="PROSITE" id="PS00859">
    <property type="entry name" value="GTP_CYCLOHYDROL_1_1"/>
    <property type="match status" value="1"/>
</dbReference>
<dbReference type="PROSITE" id="PS00860">
    <property type="entry name" value="GTP_CYCLOHYDROL_1_2"/>
    <property type="match status" value="1"/>
</dbReference>